<gene>
    <name evidence="1" type="primary">tatA</name>
    <name type="ordered locus">BCAH187_A2354</name>
</gene>
<dbReference type="EMBL" id="CP001177">
    <property type="protein sequence ID" value="ACJ81997.1"/>
    <property type="molecule type" value="Genomic_DNA"/>
</dbReference>
<dbReference type="SMR" id="B7HQ38"/>
<dbReference type="KEGG" id="bcr:BCAH187_A2354"/>
<dbReference type="HOGENOM" id="CLU_086034_6_0_9"/>
<dbReference type="Proteomes" id="UP000002214">
    <property type="component" value="Chromosome"/>
</dbReference>
<dbReference type="GO" id="GO:0033281">
    <property type="term" value="C:TAT protein transport complex"/>
    <property type="evidence" value="ECO:0007669"/>
    <property type="project" value="UniProtKB-UniRule"/>
</dbReference>
<dbReference type="GO" id="GO:0008320">
    <property type="term" value="F:protein transmembrane transporter activity"/>
    <property type="evidence" value="ECO:0007669"/>
    <property type="project" value="UniProtKB-UniRule"/>
</dbReference>
<dbReference type="GO" id="GO:0043953">
    <property type="term" value="P:protein transport by the Tat complex"/>
    <property type="evidence" value="ECO:0007669"/>
    <property type="project" value="UniProtKB-UniRule"/>
</dbReference>
<dbReference type="Gene3D" id="1.20.5.3310">
    <property type="match status" value="1"/>
</dbReference>
<dbReference type="HAMAP" id="MF_00236">
    <property type="entry name" value="TatA_E"/>
    <property type="match status" value="1"/>
</dbReference>
<dbReference type="InterPro" id="IPR003369">
    <property type="entry name" value="TatA/B/E"/>
</dbReference>
<dbReference type="InterPro" id="IPR006312">
    <property type="entry name" value="TatA/E"/>
</dbReference>
<dbReference type="NCBIfam" id="NF011430">
    <property type="entry name" value="PRK14861.1"/>
    <property type="match status" value="1"/>
</dbReference>
<dbReference type="NCBIfam" id="TIGR01411">
    <property type="entry name" value="tatAE"/>
    <property type="match status" value="1"/>
</dbReference>
<dbReference type="PANTHER" id="PTHR42982">
    <property type="entry name" value="SEC-INDEPENDENT PROTEIN TRANSLOCASE PROTEIN TATA"/>
    <property type="match status" value="1"/>
</dbReference>
<dbReference type="PANTHER" id="PTHR42982:SF1">
    <property type="entry name" value="SEC-INDEPENDENT PROTEIN TRANSLOCASE PROTEIN TATA"/>
    <property type="match status" value="1"/>
</dbReference>
<dbReference type="Pfam" id="PF02416">
    <property type="entry name" value="TatA_B_E"/>
    <property type="match status" value="1"/>
</dbReference>
<dbReference type="PRINTS" id="PR01506">
    <property type="entry name" value="TATBPROTEIN"/>
</dbReference>
<organism>
    <name type="scientific">Bacillus cereus (strain AH187)</name>
    <dbReference type="NCBI Taxonomy" id="405534"/>
    <lineage>
        <taxon>Bacteria</taxon>
        <taxon>Bacillati</taxon>
        <taxon>Bacillota</taxon>
        <taxon>Bacilli</taxon>
        <taxon>Bacillales</taxon>
        <taxon>Bacillaceae</taxon>
        <taxon>Bacillus</taxon>
        <taxon>Bacillus cereus group</taxon>
    </lineage>
</organism>
<keyword id="KW-1003">Cell membrane</keyword>
<keyword id="KW-0472">Membrane</keyword>
<keyword id="KW-0653">Protein transport</keyword>
<keyword id="KW-0811">Translocation</keyword>
<keyword id="KW-0812">Transmembrane</keyword>
<keyword id="KW-1133">Transmembrane helix</keyword>
<keyword id="KW-0813">Transport</keyword>
<name>TATA_BACC7</name>
<sequence>MFSNIGFPGLILILVAVLILFGPKKLPEIGKALGETLKEFKKSTKELTDDAFQEKEKKEKM</sequence>
<accession>B7HQ38</accession>
<comment type="function">
    <text evidence="1">Part of the twin-arginine translocation (Tat) system that transports large folded proteins containing a characteristic twin-arginine motif in their signal peptide across membranes. TatA could form the protein-conducting channel of the Tat system.</text>
</comment>
<comment type="subunit">
    <text evidence="1">Forms a complex with TatC.</text>
</comment>
<comment type="subcellular location">
    <subcellularLocation>
        <location evidence="1">Cell membrane</location>
        <topology evidence="1">Single-pass membrane protein</topology>
    </subcellularLocation>
</comment>
<comment type="similarity">
    <text evidence="1">Belongs to the TatA/E family.</text>
</comment>
<reference key="1">
    <citation type="submission" date="2008-10" db="EMBL/GenBank/DDBJ databases">
        <title>Genome sequence of Bacillus cereus AH187.</title>
        <authorList>
            <person name="Dodson R.J."/>
            <person name="Durkin A.S."/>
            <person name="Rosovitz M.J."/>
            <person name="Rasko D.A."/>
            <person name="Kolsto A.B."/>
            <person name="Okstad O.A."/>
            <person name="Ravel J."/>
            <person name="Sutton G."/>
        </authorList>
    </citation>
    <scope>NUCLEOTIDE SEQUENCE [LARGE SCALE GENOMIC DNA]</scope>
    <source>
        <strain>AH187</strain>
    </source>
</reference>
<proteinExistence type="inferred from homology"/>
<protein>
    <recommendedName>
        <fullName evidence="1">Sec-independent protein translocase protein TatA</fullName>
    </recommendedName>
</protein>
<evidence type="ECO:0000255" key="1">
    <source>
        <dbReference type="HAMAP-Rule" id="MF_00236"/>
    </source>
</evidence>
<feature type="chain" id="PRO_1000125192" description="Sec-independent protein translocase protein TatA">
    <location>
        <begin position="1"/>
        <end position="61"/>
    </location>
</feature>
<feature type="transmembrane region" description="Helical" evidence="1">
    <location>
        <begin position="1"/>
        <end position="21"/>
    </location>
</feature>